<feature type="propeptide" id="PRO_0000459960" evidence="1">
    <location>
        <begin position="1"/>
        <end position="12"/>
    </location>
</feature>
<feature type="chain" id="PRO_1000128814" description="Large ribosomal subunit protein bL27">
    <location>
        <begin position="13"/>
        <end position="97"/>
    </location>
</feature>
<feature type="region of interest" description="Disordered" evidence="3">
    <location>
        <begin position="13"/>
        <end position="37"/>
    </location>
</feature>
<accession>B5E4L9</accession>
<keyword id="KW-0687">Ribonucleoprotein</keyword>
<keyword id="KW-0689">Ribosomal protein</keyword>
<proteinExistence type="inferred from homology"/>
<comment type="PTM">
    <text evidence="1">The N-terminus is cleaved by ribosomal processing cysteine protease Prp.</text>
</comment>
<comment type="similarity">
    <text evidence="2">Belongs to the bacterial ribosomal protein bL27 family.</text>
</comment>
<sequence length="97" mass="10462">MLKMTLNNLQLFAHKKGGGSTSNGRDSQAKRLGAKAADGQTVTGGSILYRQRGTHIYPGVNVGRGGDDTLFAKVEGVVRFERKGRDKKQVSVYPIAK</sequence>
<protein>
    <recommendedName>
        <fullName evidence="2">Large ribosomal subunit protein bL27</fullName>
    </recommendedName>
    <alternativeName>
        <fullName evidence="4">50S ribosomal protein L27</fullName>
    </alternativeName>
</protein>
<reference key="1">
    <citation type="journal article" date="2001" name="Microb. Drug Resist.">
        <title>Annotated draft genomic sequence from a Streptococcus pneumoniae type 19F clinical isolate.</title>
        <authorList>
            <person name="Dopazo J."/>
            <person name="Mendoza A."/>
            <person name="Herrero J."/>
            <person name="Caldara F."/>
            <person name="Humbert Y."/>
            <person name="Friedli L."/>
            <person name="Guerrier M."/>
            <person name="Grand-Schenk E."/>
            <person name="Gandin C."/>
            <person name="de Francesco M."/>
            <person name="Polissi A."/>
            <person name="Buell G."/>
            <person name="Feger G."/>
            <person name="Garcia E."/>
            <person name="Peitsch M."/>
            <person name="Garcia-Bustos J.F."/>
        </authorList>
    </citation>
    <scope>NUCLEOTIDE SEQUENCE [LARGE SCALE GENOMIC DNA]</scope>
    <source>
        <strain>G54</strain>
    </source>
</reference>
<reference key="2">
    <citation type="submission" date="2008-03" db="EMBL/GenBank/DDBJ databases">
        <title>Pneumococcal beta glucoside metabolism investigated by whole genome comparison.</title>
        <authorList>
            <person name="Mulas L."/>
            <person name="Trappetti C."/>
            <person name="Hakenbeck R."/>
            <person name="Iannelli F."/>
            <person name="Pozzi G."/>
            <person name="Davidsen T.M."/>
            <person name="Tettelin H."/>
            <person name="Oggioni M."/>
        </authorList>
    </citation>
    <scope>NUCLEOTIDE SEQUENCE [LARGE SCALE GENOMIC DNA]</scope>
    <source>
        <strain>G54</strain>
    </source>
</reference>
<organism>
    <name type="scientific">Streptococcus pneumoniae serotype 19F (strain G54)</name>
    <dbReference type="NCBI Taxonomy" id="512566"/>
    <lineage>
        <taxon>Bacteria</taxon>
        <taxon>Bacillati</taxon>
        <taxon>Bacillota</taxon>
        <taxon>Bacilli</taxon>
        <taxon>Lactobacillales</taxon>
        <taxon>Streptococcaceae</taxon>
        <taxon>Streptococcus</taxon>
    </lineage>
</organism>
<evidence type="ECO:0000250" key="1">
    <source>
        <dbReference type="UniProtKB" id="Q2FXT0"/>
    </source>
</evidence>
<evidence type="ECO:0000255" key="2">
    <source>
        <dbReference type="HAMAP-Rule" id="MF_00539"/>
    </source>
</evidence>
<evidence type="ECO:0000256" key="3">
    <source>
        <dbReference type="SAM" id="MobiDB-lite"/>
    </source>
</evidence>
<evidence type="ECO:0000305" key="4"/>
<gene>
    <name evidence="2" type="primary">rpmA</name>
    <name type="ordered locus">SPG_1025</name>
</gene>
<dbReference type="EMBL" id="CP001015">
    <property type="protein sequence ID" value="ACF56038.1"/>
    <property type="molecule type" value="Genomic_DNA"/>
</dbReference>
<dbReference type="SMR" id="B5E4L9"/>
<dbReference type="KEGG" id="spx:SPG_1025"/>
<dbReference type="HOGENOM" id="CLU_095424_4_0_9"/>
<dbReference type="GO" id="GO:0022625">
    <property type="term" value="C:cytosolic large ribosomal subunit"/>
    <property type="evidence" value="ECO:0007669"/>
    <property type="project" value="TreeGrafter"/>
</dbReference>
<dbReference type="GO" id="GO:0003735">
    <property type="term" value="F:structural constituent of ribosome"/>
    <property type="evidence" value="ECO:0007669"/>
    <property type="project" value="InterPro"/>
</dbReference>
<dbReference type="GO" id="GO:0006412">
    <property type="term" value="P:translation"/>
    <property type="evidence" value="ECO:0007669"/>
    <property type="project" value="UniProtKB-UniRule"/>
</dbReference>
<dbReference type="FunFam" id="2.40.50.100:FF:000004">
    <property type="entry name" value="50S ribosomal protein L27"/>
    <property type="match status" value="1"/>
</dbReference>
<dbReference type="Gene3D" id="2.40.50.100">
    <property type="match status" value="1"/>
</dbReference>
<dbReference type="HAMAP" id="MF_00539">
    <property type="entry name" value="Ribosomal_bL27"/>
    <property type="match status" value="1"/>
</dbReference>
<dbReference type="InterPro" id="IPR001684">
    <property type="entry name" value="Ribosomal_bL27"/>
</dbReference>
<dbReference type="InterPro" id="IPR018261">
    <property type="entry name" value="Ribosomal_bL27_CS"/>
</dbReference>
<dbReference type="NCBIfam" id="TIGR00062">
    <property type="entry name" value="L27"/>
    <property type="match status" value="1"/>
</dbReference>
<dbReference type="PANTHER" id="PTHR15893:SF0">
    <property type="entry name" value="LARGE RIBOSOMAL SUBUNIT PROTEIN BL27M"/>
    <property type="match status" value="1"/>
</dbReference>
<dbReference type="PANTHER" id="PTHR15893">
    <property type="entry name" value="RIBOSOMAL PROTEIN L27"/>
    <property type="match status" value="1"/>
</dbReference>
<dbReference type="Pfam" id="PF01016">
    <property type="entry name" value="Ribosomal_L27"/>
    <property type="match status" value="1"/>
</dbReference>
<dbReference type="PRINTS" id="PR00063">
    <property type="entry name" value="RIBOSOMALL27"/>
</dbReference>
<dbReference type="SUPFAM" id="SSF110324">
    <property type="entry name" value="Ribosomal L27 protein-like"/>
    <property type="match status" value="1"/>
</dbReference>
<dbReference type="PROSITE" id="PS00831">
    <property type="entry name" value="RIBOSOMAL_L27"/>
    <property type="match status" value="1"/>
</dbReference>
<name>RL27_STRP4</name>